<sequence>MKGKKYYSDYHVWIEPIHSQIVRLGLSSRMQEHLGNILHIDLPSLGASIKEGEELCVLESSKSAIEVLSPVSGEVIEVNIALEDDTHPINHSAESEGWFVVLQLSEDFDGERFSLDP</sequence>
<reference key="1">
    <citation type="journal article" date="2000" name="Nucleic Acids Res.">
        <title>Genome sequences of Chlamydia trachomatis MoPn and Chlamydia pneumoniae AR39.</title>
        <authorList>
            <person name="Read T.D."/>
            <person name="Brunham R.C."/>
            <person name="Shen C."/>
            <person name="Gill S.R."/>
            <person name="Heidelberg J.F."/>
            <person name="White O."/>
            <person name="Hickey E.K."/>
            <person name="Peterson J.D."/>
            <person name="Utterback T.R."/>
            <person name="Berry K.J."/>
            <person name="Bass S."/>
            <person name="Linher K.D."/>
            <person name="Weidman J.F."/>
            <person name="Khouri H.M."/>
            <person name="Craven B."/>
            <person name="Bowman C."/>
            <person name="Dodson R.J."/>
            <person name="Gwinn M.L."/>
            <person name="Nelson W.C."/>
            <person name="DeBoy R.T."/>
            <person name="Kolonay J.F."/>
            <person name="McClarty G."/>
            <person name="Salzberg S.L."/>
            <person name="Eisen J.A."/>
            <person name="Fraser C.M."/>
        </authorList>
    </citation>
    <scope>NUCLEOTIDE SEQUENCE [LARGE SCALE GENOMIC DNA]</scope>
    <source>
        <strain>MoPn / Nigg</strain>
    </source>
</reference>
<dbReference type="EMBL" id="AE002160">
    <property type="protein sequence ID" value="AAF39393.1"/>
    <property type="molecule type" value="Genomic_DNA"/>
</dbReference>
<dbReference type="PIR" id="F81690">
    <property type="entry name" value="F81690"/>
</dbReference>
<dbReference type="RefSeq" id="WP_010230826.1">
    <property type="nucleotide sequence ID" value="NZ_CP063055.1"/>
</dbReference>
<dbReference type="SMR" id="Q9PKB2"/>
<dbReference type="GeneID" id="1245914"/>
<dbReference type="KEGG" id="cmu:TC_0554"/>
<dbReference type="eggNOG" id="COG0509">
    <property type="taxonomic scope" value="Bacteria"/>
</dbReference>
<dbReference type="HOGENOM" id="CLU_097408_2_4_0"/>
<dbReference type="OrthoDB" id="9796712at2"/>
<dbReference type="Proteomes" id="UP000000800">
    <property type="component" value="Chromosome"/>
</dbReference>
<dbReference type="GO" id="GO:0005829">
    <property type="term" value="C:cytosol"/>
    <property type="evidence" value="ECO:0007669"/>
    <property type="project" value="TreeGrafter"/>
</dbReference>
<dbReference type="GO" id="GO:0005960">
    <property type="term" value="C:glycine cleavage complex"/>
    <property type="evidence" value="ECO:0007669"/>
    <property type="project" value="InterPro"/>
</dbReference>
<dbReference type="GO" id="GO:0019464">
    <property type="term" value="P:glycine decarboxylation via glycine cleavage system"/>
    <property type="evidence" value="ECO:0007669"/>
    <property type="project" value="InterPro"/>
</dbReference>
<dbReference type="CDD" id="cd06848">
    <property type="entry name" value="GCS_H"/>
    <property type="match status" value="1"/>
</dbReference>
<dbReference type="Gene3D" id="2.40.50.100">
    <property type="match status" value="1"/>
</dbReference>
<dbReference type="InterPro" id="IPR003016">
    <property type="entry name" value="2-oxoA_DH_lipoyl-BS"/>
</dbReference>
<dbReference type="InterPro" id="IPR000089">
    <property type="entry name" value="Biotin_lipoyl"/>
</dbReference>
<dbReference type="InterPro" id="IPR002930">
    <property type="entry name" value="GCV_H"/>
</dbReference>
<dbReference type="InterPro" id="IPR033753">
    <property type="entry name" value="GCV_H/Fam206"/>
</dbReference>
<dbReference type="InterPro" id="IPR017514">
    <property type="entry name" value="GcvH_Chlamydia"/>
</dbReference>
<dbReference type="InterPro" id="IPR011053">
    <property type="entry name" value="Single_hybrid_motif"/>
</dbReference>
<dbReference type="NCBIfam" id="TIGR03077">
    <property type="entry name" value="not_gcvH"/>
    <property type="match status" value="1"/>
</dbReference>
<dbReference type="PANTHER" id="PTHR11715">
    <property type="entry name" value="GLYCINE CLEAVAGE SYSTEM H PROTEIN"/>
    <property type="match status" value="1"/>
</dbReference>
<dbReference type="PANTHER" id="PTHR11715:SF3">
    <property type="entry name" value="GLYCINE CLEAVAGE SYSTEM H PROTEIN-RELATED"/>
    <property type="match status" value="1"/>
</dbReference>
<dbReference type="Pfam" id="PF01597">
    <property type="entry name" value="GCV_H"/>
    <property type="match status" value="1"/>
</dbReference>
<dbReference type="SUPFAM" id="SSF51230">
    <property type="entry name" value="Single hybrid motif"/>
    <property type="match status" value="1"/>
</dbReference>
<dbReference type="PROSITE" id="PS50968">
    <property type="entry name" value="BIOTINYL_LIPOYL"/>
    <property type="match status" value="1"/>
</dbReference>
<dbReference type="PROSITE" id="PS00189">
    <property type="entry name" value="LIPOYL"/>
    <property type="match status" value="1"/>
</dbReference>
<feature type="chain" id="PRO_0000166212" description="Glycine cleavage system H-like protein">
    <location>
        <begin position="1"/>
        <end position="117"/>
    </location>
</feature>
<feature type="domain" description="Lipoyl-binding" evidence="1">
    <location>
        <begin position="21"/>
        <end position="103"/>
    </location>
</feature>
<feature type="modified residue" description="N6-lipoyllysine" evidence="1">
    <location>
        <position position="62"/>
    </location>
</feature>
<comment type="cofactor">
    <cofactor evidence="1">
        <name>(R)-lipoate</name>
        <dbReference type="ChEBI" id="CHEBI:83088"/>
    </cofactor>
    <text evidence="1">Binds 1 lipoyl cofactor covalently.</text>
</comment>
<comment type="similarity">
    <text evidence="2">Belongs to the GcvH family.</text>
</comment>
<proteinExistence type="inferred from homology"/>
<keyword id="KW-0450">Lipoyl</keyword>
<gene>
    <name evidence="3" type="primary">gcvH</name>
    <name type="ordered locus">TC_0554</name>
</gene>
<organism>
    <name type="scientific">Chlamydia muridarum (strain MoPn / Nigg)</name>
    <dbReference type="NCBI Taxonomy" id="243161"/>
    <lineage>
        <taxon>Bacteria</taxon>
        <taxon>Pseudomonadati</taxon>
        <taxon>Chlamydiota</taxon>
        <taxon>Chlamydiia</taxon>
        <taxon>Chlamydiales</taxon>
        <taxon>Chlamydiaceae</taxon>
        <taxon>Chlamydia/Chlamydophila group</taxon>
        <taxon>Chlamydia</taxon>
    </lineage>
</organism>
<evidence type="ECO:0000255" key="1">
    <source>
        <dbReference type="PROSITE-ProRule" id="PRU01066"/>
    </source>
</evidence>
<evidence type="ECO:0000305" key="2"/>
<evidence type="ECO:0000312" key="3">
    <source>
        <dbReference type="EMBL" id="AAF39393.1"/>
    </source>
</evidence>
<accession>Q9PKB2</accession>
<protein>
    <recommendedName>
        <fullName evidence="2">Glycine cleavage system H-like protein</fullName>
    </recommendedName>
</protein>
<name>GCSHL_CHLMU</name>